<gene>
    <name type="primary">rglB</name>
    <name type="ORF">AFUA_1G17230</name>
</gene>
<comment type="function">
    <text evidence="1">Pectinolytic enzymes consist of four classes of enzymes: pectin lyase, polygalacturonase, pectin methylesterase and rhamnogalacturonase. Degrades the rhamnogalacturonan I (RG-I) backbone of pectin (By similarity).</text>
</comment>
<comment type="catalytic activity">
    <reaction>
        <text>Endotype eliminative cleavage of L-alpha-rhamnopyranosyl-(1-&gt;4)-alpha-D-galactopyranosyluronic acid bonds of rhamnogalacturonan I domains in ramified hairy regions of pectin leaving L-rhamnopyranose at the reducing end and 4-deoxy-4,5-unsaturated D-galactopyranosyluronic acid at the non-reducing end.</text>
        <dbReference type="EC" id="4.2.2.23"/>
    </reaction>
</comment>
<comment type="subcellular location">
    <subcellularLocation>
        <location evidence="1">Secreted</location>
    </subcellularLocation>
</comment>
<comment type="similarity">
    <text evidence="3">Belongs to the polysaccharide lyase 4 family.</text>
</comment>
<evidence type="ECO:0000250" key="1"/>
<evidence type="ECO:0000255" key="2"/>
<evidence type="ECO:0000305" key="3"/>
<dbReference type="EC" id="4.2.2.23"/>
<dbReference type="EMBL" id="AAHF01000004">
    <property type="protein sequence ID" value="EAL91053.1"/>
    <property type="molecule type" value="Genomic_DNA"/>
</dbReference>
<dbReference type="RefSeq" id="XP_753091.1">
    <property type="nucleotide sequence ID" value="XM_747998.1"/>
</dbReference>
<dbReference type="SMR" id="Q4WR79"/>
<dbReference type="STRING" id="330879.Q4WR79"/>
<dbReference type="GlyCosmos" id="Q4WR79">
    <property type="glycosylation" value="8 sites, No reported glycans"/>
</dbReference>
<dbReference type="EnsemblFungi" id="EAL91053">
    <property type="protein sequence ID" value="EAL91053"/>
    <property type="gene ID" value="AFUA_1G17230"/>
</dbReference>
<dbReference type="GeneID" id="3510123"/>
<dbReference type="KEGG" id="afm:AFUA_1G17230"/>
<dbReference type="VEuPathDB" id="FungiDB:Afu1g17230"/>
<dbReference type="eggNOG" id="ENOG502QQM5">
    <property type="taxonomic scope" value="Eukaryota"/>
</dbReference>
<dbReference type="HOGENOM" id="CLU_016624_0_0_1"/>
<dbReference type="InParanoid" id="Q4WR79"/>
<dbReference type="OMA" id="ATWYLGN"/>
<dbReference type="OrthoDB" id="2130367at2759"/>
<dbReference type="Proteomes" id="UP000002530">
    <property type="component" value="Chromosome 1"/>
</dbReference>
<dbReference type="GO" id="GO:0005576">
    <property type="term" value="C:extracellular region"/>
    <property type="evidence" value="ECO:0007669"/>
    <property type="project" value="UniProtKB-SubCell"/>
</dbReference>
<dbReference type="GO" id="GO:0030246">
    <property type="term" value="F:carbohydrate binding"/>
    <property type="evidence" value="ECO:0007669"/>
    <property type="project" value="InterPro"/>
</dbReference>
<dbReference type="GO" id="GO:0102210">
    <property type="term" value="F:rhamnogalacturonan endolyase activity"/>
    <property type="evidence" value="ECO:0007669"/>
    <property type="project" value="UniProtKB-EC"/>
</dbReference>
<dbReference type="GO" id="GO:0071555">
    <property type="term" value="P:cell wall organization"/>
    <property type="evidence" value="ECO:0007669"/>
    <property type="project" value="UniProtKB-KW"/>
</dbReference>
<dbReference type="GO" id="GO:0000272">
    <property type="term" value="P:polysaccharide catabolic process"/>
    <property type="evidence" value="ECO:0007669"/>
    <property type="project" value="UniProtKB-KW"/>
</dbReference>
<dbReference type="CDD" id="cd10317">
    <property type="entry name" value="RGL4_C"/>
    <property type="match status" value="1"/>
</dbReference>
<dbReference type="CDD" id="cd10316">
    <property type="entry name" value="RGL4_M"/>
    <property type="match status" value="1"/>
</dbReference>
<dbReference type="CDD" id="cd10320">
    <property type="entry name" value="RGL4_N"/>
    <property type="match status" value="1"/>
</dbReference>
<dbReference type="Gene3D" id="2.70.98.10">
    <property type="match status" value="1"/>
</dbReference>
<dbReference type="Gene3D" id="2.60.40.1120">
    <property type="entry name" value="Carboxypeptidase-like, regulatory domain"/>
    <property type="match status" value="1"/>
</dbReference>
<dbReference type="Gene3D" id="2.60.120.260">
    <property type="entry name" value="Galactose-binding domain-like"/>
    <property type="match status" value="1"/>
</dbReference>
<dbReference type="InterPro" id="IPR013784">
    <property type="entry name" value="Carb-bd-like_fold"/>
</dbReference>
<dbReference type="InterPro" id="IPR011013">
    <property type="entry name" value="Gal_mutarotase_sf_dom"/>
</dbReference>
<dbReference type="InterPro" id="IPR008979">
    <property type="entry name" value="Galactose-bd-like_sf"/>
</dbReference>
<dbReference type="InterPro" id="IPR014718">
    <property type="entry name" value="GH-type_carb-bd"/>
</dbReference>
<dbReference type="InterPro" id="IPR051850">
    <property type="entry name" value="Polysacch_Lyase_4"/>
</dbReference>
<dbReference type="InterPro" id="IPR029413">
    <property type="entry name" value="RG-lyase_II"/>
</dbReference>
<dbReference type="InterPro" id="IPR029411">
    <property type="entry name" value="RG-lyase_III"/>
</dbReference>
<dbReference type="PANTHER" id="PTHR32018:SF9">
    <property type="entry name" value="RHAMNOGALACTURONATE LYASE B"/>
    <property type="match status" value="1"/>
</dbReference>
<dbReference type="PANTHER" id="PTHR32018">
    <property type="entry name" value="RHAMNOGALACTURONATE LYASE FAMILY PROTEIN"/>
    <property type="match status" value="1"/>
</dbReference>
<dbReference type="Pfam" id="PF14683">
    <property type="entry name" value="CBM-like"/>
    <property type="match status" value="1"/>
</dbReference>
<dbReference type="Pfam" id="PF14686">
    <property type="entry name" value="fn3_3"/>
    <property type="match status" value="1"/>
</dbReference>
<dbReference type="SUPFAM" id="SSF74650">
    <property type="entry name" value="Galactose mutarotase-like"/>
    <property type="match status" value="1"/>
</dbReference>
<dbReference type="SUPFAM" id="SSF49785">
    <property type="entry name" value="Galactose-binding domain-like"/>
    <property type="match status" value="1"/>
</dbReference>
<dbReference type="SUPFAM" id="SSF49452">
    <property type="entry name" value="Starch-binding domain-like"/>
    <property type="match status" value="1"/>
</dbReference>
<organism>
    <name type="scientific">Aspergillus fumigatus (strain ATCC MYA-4609 / CBS 101355 / FGSC A1100 / Af293)</name>
    <name type="common">Neosartorya fumigata</name>
    <dbReference type="NCBI Taxonomy" id="330879"/>
    <lineage>
        <taxon>Eukaryota</taxon>
        <taxon>Fungi</taxon>
        <taxon>Dikarya</taxon>
        <taxon>Ascomycota</taxon>
        <taxon>Pezizomycotina</taxon>
        <taxon>Eurotiomycetes</taxon>
        <taxon>Eurotiomycetidae</taxon>
        <taxon>Eurotiales</taxon>
        <taxon>Aspergillaceae</taxon>
        <taxon>Aspergillus</taxon>
        <taxon>Aspergillus subgen. Fumigati</taxon>
    </lineage>
</organism>
<feature type="signal peptide" evidence="2">
    <location>
        <begin position="1"/>
        <end position="19"/>
    </location>
</feature>
<feature type="chain" id="PRO_0000394375" description="Probable rhamnogalacturonate lyase B">
    <location>
        <begin position="20"/>
        <end position="658"/>
    </location>
</feature>
<feature type="glycosylation site" description="N-linked (GlcNAc...) asparagine" evidence="2">
    <location>
        <position position="110"/>
    </location>
</feature>
<feature type="glycosylation site" description="N-linked (GlcNAc...) asparagine" evidence="2">
    <location>
        <position position="143"/>
    </location>
</feature>
<feature type="glycosylation site" description="N-linked (GlcNAc...) asparagine" evidence="2">
    <location>
        <position position="239"/>
    </location>
</feature>
<feature type="glycosylation site" description="N-linked (GlcNAc...) asparagine" evidence="2">
    <location>
        <position position="280"/>
    </location>
</feature>
<feature type="glycosylation site" description="N-linked (GlcNAc...) asparagine" evidence="2">
    <location>
        <position position="522"/>
    </location>
</feature>
<feature type="glycosylation site" description="N-linked (GlcNAc...) asparagine" evidence="2">
    <location>
        <position position="530"/>
    </location>
</feature>
<feature type="glycosylation site" description="N-linked (GlcNAc...) asparagine" evidence="2">
    <location>
        <position position="592"/>
    </location>
</feature>
<feature type="glycosylation site" description="N-linked (GlcNAc...) asparagine" evidence="2">
    <location>
        <position position="633"/>
    </location>
</feature>
<sequence length="658" mass="73532">MRFAIPLGAACAWAGVALAALQIAEDFSSITLNNDRFKAVWSKSKGSVVDMFLDGQDLLGPQSGSTGIGPYLDCYCVPSGFYTAGATNPRMQYVEGTDSTGTKYAGVILNDTYTPTGQQFQQYWFLRDGETGLHMFSRLAYYNETTPFLRNLQEFRTLFRPNTQLWTHLTSSELQTAPLPSKNAVSKQVVVQDATWRFNNTPDDAYYTQFSEYFTKYTFSNQWRDNDVHGLYGDGTNSNGSTYGAWLVMNTKGPLHSDLTVDGIVYNYIVSNHHGEGTPNITNGFDRTFGPQFYLFNGGKGSTSSLQDLRSEAAKLADPSWNAEFYDSIAKHVVGYVPSSKRGSVDGRIKLPKGASNPIAILTVDGQYFQDNSVVPSSYQYWTDIDTSGRFRIDRVVEGKYRLTVYADGIFGDFVRDGVTVRAGKTTTVKEKWDAESAGKEIWRLGTPDKSSGEFRHGVARDPTHPLHPPEYLIYWGAYDWQSDFPKGIDYTIGSSDPATDFNTVHWSVFGPTPDNPNVEYNTTHDWKINFSLTKKQLRNSKKATLTIQLAGAKTASGNTDEYKASEPYINLIHESYINDQKEPLSFVIGFNQSSSCIVRSAVSCYQVRSRMEFPADWLKVGENTLTLHLPYNATDTETAILPATVYVQYDALRLELD</sequence>
<accession>Q4WR79</accession>
<keyword id="KW-0119">Carbohydrate metabolism</keyword>
<keyword id="KW-0961">Cell wall biogenesis/degradation</keyword>
<keyword id="KW-0325">Glycoprotein</keyword>
<keyword id="KW-0456">Lyase</keyword>
<keyword id="KW-0624">Polysaccharide degradation</keyword>
<keyword id="KW-1185">Reference proteome</keyword>
<keyword id="KW-0964">Secreted</keyword>
<keyword id="KW-0732">Signal</keyword>
<protein>
    <recommendedName>
        <fullName>Probable rhamnogalacturonate lyase B</fullName>
        <ecNumber>4.2.2.23</ecNumber>
    </recommendedName>
</protein>
<reference key="1">
    <citation type="journal article" date="2005" name="Nature">
        <title>Genomic sequence of the pathogenic and allergenic filamentous fungus Aspergillus fumigatus.</title>
        <authorList>
            <person name="Nierman W.C."/>
            <person name="Pain A."/>
            <person name="Anderson M.J."/>
            <person name="Wortman J.R."/>
            <person name="Kim H.S."/>
            <person name="Arroyo J."/>
            <person name="Berriman M."/>
            <person name="Abe K."/>
            <person name="Archer D.B."/>
            <person name="Bermejo C."/>
            <person name="Bennett J.W."/>
            <person name="Bowyer P."/>
            <person name="Chen D."/>
            <person name="Collins M."/>
            <person name="Coulsen R."/>
            <person name="Davies R."/>
            <person name="Dyer P.S."/>
            <person name="Farman M.L."/>
            <person name="Fedorova N."/>
            <person name="Fedorova N.D."/>
            <person name="Feldblyum T.V."/>
            <person name="Fischer R."/>
            <person name="Fosker N."/>
            <person name="Fraser A."/>
            <person name="Garcia J.L."/>
            <person name="Garcia M.J."/>
            <person name="Goble A."/>
            <person name="Goldman G.H."/>
            <person name="Gomi K."/>
            <person name="Griffith-Jones S."/>
            <person name="Gwilliam R."/>
            <person name="Haas B.J."/>
            <person name="Haas H."/>
            <person name="Harris D.E."/>
            <person name="Horiuchi H."/>
            <person name="Huang J."/>
            <person name="Humphray S."/>
            <person name="Jimenez J."/>
            <person name="Keller N."/>
            <person name="Khouri H."/>
            <person name="Kitamoto K."/>
            <person name="Kobayashi T."/>
            <person name="Konzack S."/>
            <person name="Kulkarni R."/>
            <person name="Kumagai T."/>
            <person name="Lafton A."/>
            <person name="Latge J.-P."/>
            <person name="Li W."/>
            <person name="Lord A."/>
            <person name="Lu C."/>
            <person name="Majoros W.H."/>
            <person name="May G.S."/>
            <person name="Miller B.L."/>
            <person name="Mohamoud Y."/>
            <person name="Molina M."/>
            <person name="Monod M."/>
            <person name="Mouyna I."/>
            <person name="Mulligan S."/>
            <person name="Murphy L.D."/>
            <person name="O'Neil S."/>
            <person name="Paulsen I."/>
            <person name="Penalva M.A."/>
            <person name="Pertea M."/>
            <person name="Price C."/>
            <person name="Pritchard B.L."/>
            <person name="Quail M.A."/>
            <person name="Rabbinowitsch E."/>
            <person name="Rawlins N."/>
            <person name="Rajandream M.A."/>
            <person name="Reichard U."/>
            <person name="Renauld H."/>
            <person name="Robson G.D."/>
            <person name="Rodriguez de Cordoba S."/>
            <person name="Rodriguez-Pena J.M."/>
            <person name="Ronning C.M."/>
            <person name="Rutter S."/>
            <person name="Salzberg S.L."/>
            <person name="Sanchez M."/>
            <person name="Sanchez-Ferrero J.C."/>
            <person name="Saunders D."/>
            <person name="Seeger K."/>
            <person name="Squares R."/>
            <person name="Squares S."/>
            <person name="Takeuchi M."/>
            <person name="Tekaia F."/>
            <person name="Turner G."/>
            <person name="Vazquez de Aldana C.R."/>
            <person name="Weidman J."/>
            <person name="White O."/>
            <person name="Woodward J.R."/>
            <person name="Yu J.-H."/>
            <person name="Fraser C.M."/>
            <person name="Galagan J.E."/>
            <person name="Asai K."/>
            <person name="Machida M."/>
            <person name="Hall N."/>
            <person name="Barrell B.G."/>
            <person name="Denning D.W."/>
        </authorList>
    </citation>
    <scope>NUCLEOTIDE SEQUENCE [LARGE SCALE GENOMIC DNA]</scope>
    <source>
        <strain>ATCC MYA-4609 / CBS 101355 / FGSC A1100 / Af293</strain>
    </source>
</reference>
<proteinExistence type="inferred from homology"/>
<name>RGLB_ASPFU</name>